<comment type="function">
    <text evidence="3">Transcription factor that positively regulates genes involved in anthocyanin biosynthesis such as A1.</text>
</comment>
<comment type="subcellular location">
    <subcellularLocation>
        <location evidence="4">Nucleus</location>
    </subcellularLocation>
</comment>
<name>MYB1_MAIZE</name>
<proteinExistence type="evidence at transcript level"/>
<protein>
    <recommendedName>
        <fullName>Myb-related protein Zm1</fullName>
    </recommendedName>
</protein>
<reference key="1">
    <citation type="journal article" date="1989" name="Mol. Gen. Genet.">
        <title>Multiple genes are transcribed in Hordeum vulgare and Zea mays that carry the DNA binding domain of the myb oncoproteins.</title>
        <authorList>
            <person name="Marocco A."/>
            <person name="Wissenbach M."/>
            <person name="Becker D."/>
            <person name="Paz-Ares J."/>
            <person name="Saedler H."/>
            <person name="Salamini F."/>
            <person name="Rohde W."/>
        </authorList>
    </citation>
    <scope>NUCLEOTIDE SEQUENCE [MRNA]</scope>
</reference>
<reference key="2">
    <citation type="journal article" date="1994" name="Plant J.">
        <title>Molecular analysis of protein domain function encoded by the myb-homologous maize genes C1, Zm 1 and Zm 38.</title>
        <authorList>
            <person name="Franken P."/>
            <person name="Schrell S."/>
            <person name="Peterson P.A."/>
            <person name="Saedler H."/>
            <person name="Wienand U."/>
        </authorList>
    </citation>
    <scope>NUCLEOTIDE SEQUENCE [GENOMIC DNA]</scope>
    <scope>FUNCTION</scope>
</reference>
<organism>
    <name type="scientific">Zea mays</name>
    <name type="common">Maize</name>
    <dbReference type="NCBI Taxonomy" id="4577"/>
    <lineage>
        <taxon>Eukaryota</taxon>
        <taxon>Viridiplantae</taxon>
        <taxon>Streptophyta</taxon>
        <taxon>Embryophyta</taxon>
        <taxon>Tracheophyta</taxon>
        <taxon>Spermatophyta</taxon>
        <taxon>Magnoliopsida</taxon>
        <taxon>Liliopsida</taxon>
        <taxon>Poales</taxon>
        <taxon>Poaceae</taxon>
        <taxon>PACMAD clade</taxon>
        <taxon>Panicoideae</taxon>
        <taxon>Andropogonodae</taxon>
        <taxon>Andropogoneae</taxon>
        <taxon>Tripsacinae</taxon>
        <taxon>Zea</taxon>
    </lineage>
</organism>
<keyword id="KW-0010">Activator</keyword>
<keyword id="KW-0238">DNA-binding</keyword>
<keyword id="KW-0539">Nucleus</keyword>
<keyword id="KW-1185">Reference proteome</keyword>
<keyword id="KW-0677">Repeat</keyword>
<keyword id="KW-0804">Transcription</keyword>
<keyword id="KW-0805">Transcription regulation</keyword>
<sequence length="340" mass="36239">MGRGRAPCCAKVGLNRGSWTPQEDMRLIAYIQKHGHTNWRALPKQAGLLRCGKSCRLRWINYLRPDLKRGNFTDEEEEAIIRLHGLLGNKWSKIAACLPGRTDNEIKNVWNTHLKKKVAQREKKKAGAGSGDAGTPATAPLSSATSSTTTHNSSGGSDSGDQCGTSREPDATDVCTLQPEDMDVSDMLVDGAPPAAQPMPSPSSSSSLTTCVGGVEELIELPVIDIEPEIWSIIDGESAVARHGGDAAAPCTGTGTAVSTSEAEEAAANDWWLENLEKELGLWGYAEEDTQAHPDLLDHYTGLSPLCALEGDPVSTYFQTGPAAAEPELLVVVEPSAVLL</sequence>
<feature type="chain" id="PRO_0000197064" description="Myb-related protein Zm1">
    <location>
        <begin position="1"/>
        <end position="340"/>
    </location>
</feature>
<feature type="domain" description="HTH myb-type 1" evidence="1">
    <location>
        <begin position="11"/>
        <end position="63"/>
    </location>
</feature>
<feature type="domain" description="HTH myb-type 2" evidence="1">
    <location>
        <begin position="64"/>
        <end position="118"/>
    </location>
</feature>
<feature type="DNA-binding region" description="H-T-H motif" evidence="1">
    <location>
        <begin position="39"/>
        <end position="63"/>
    </location>
</feature>
<feature type="DNA-binding region" description="H-T-H motif" evidence="1">
    <location>
        <begin position="91"/>
        <end position="114"/>
    </location>
</feature>
<feature type="region of interest" description="Disordered" evidence="2">
    <location>
        <begin position="116"/>
        <end position="173"/>
    </location>
</feature>
<feature type="region of interest" description="Disordered" evidence="2">
    <location>
        <begin position="190"/>
        <end position="209"/>
    </location>
</feature>
<feature type="compositionally biased region" description="Basic residues" evidence="2">
    <location>
        <begin position="116"/>
        <end position="126"/>
    </location>
</feature>
<feature type="compositionally biased region" description="Low complexity" evidence="2">
    <location>
        <begin position="133"/>
        <end position="166"/>
    </location>
</feature>
<feature type="sequence conflict" description="In Ref. 2; X78845." evidence="4" ref="2">
    <location>
        <position position="78"/>
    </location>
</feature>
<dbReference type="EMBL" id="X78845">
    <property type="status" value="NOT_ANNOTATED_CDS"/>
    <property type="molecule type" value="Genomic_DNA"/>
</dbReference>
<dbReference type="PIR" id="S04898">
    <property type="entry name" value="S04898"/>
</dbReference>
<dbReference type="SMR" id="P20024"/>
<dbReference type="FunCoup" id="P20024">
    <property type="interactions" value="140"/>
</dbReference>
<dbReference type="STRING" id="4577.P20024"/>
<dbReference type="PaxDb" id="4577-GRMZM5G833253_P01"/>
<dbReference type="MaizeGDB" id="69590"/>
<dbReference type="eggNOG" id="KOG0048">
    <property type="taxonomic scope" value="Eukaryota"/>
</dbReference>
<dbReference type="InParanoid" id="P20024"/>
<dbReference type="Proteomes" id="UP000007305">
    <property type="component" value="Unplaced"/>
</dbReference>
<dbReference type="ExpressionAtlas" id="P20024">
    <property type="expression patterns" value="baseline and differential"/>
</dbReference>
<dbReference type="GO" id="GO:0005634">
    <property type="term" value="C:nucleus"/>
    <property type="evidence" value="ECO:0007669"/>
    <property type="project" value="UniProtKB-SubCell"/>
</dbReference>
<dbReference type="GO" id="GO:0003677">
    <property type="term" value="F:DNA binding"/>
    <property type="evidence" value="ECO:0007669"/>
    <property type="project" value="UniProtKB-KW"/>
</dbReference>
<dbReference type="CDD" id="cd00167">
    <property type="entry name" value="SANT"/>
    <property type="match status" value="2"/>
</dbReference>
<dbReference type="FunFam" id="1.10.10.60:FF:000310">
    <property type="entry name" value="MYB transcription factor"/>
    <property type="match status" value="1"/>
</dbReference>
<dbReference type="FunFam" id="1.10.10.60:FF:000001">
    <property type="entry name" value="MYB-related transcription factor"/>
    <property type="match status" value="1"/>
</dbReference>
<dbReference type="Gene3D" id="1.10.10.60">
    <property type="entry name" value="Homeodomain-like"/>
    <property type="match status" value="2"/>
</dbReference>
<dbReference type="InterPro" id="IPR009057">
    <property type="entry name" value="Homeodomain-like_sf"/>
</dbReference>
<dbReference type="InterPro" id="IPR017930">
    <property type="entry name" value="Myb_dom"/>
</dbReference>
<dbReference type="InterPro" id="IPR015495">
    <property type="entry name" value="Myb_TF_plants"/>
</dbReference>
<dbReference type="InterPro" id="IPR001005">
    <property type="entry name" value="SANT/Myb"/>
</dbReference>
<dbReference type="PANTHER" id="PTHR10641">
    <property type="entry name" value="MYB FAMILY TRANSCRIPTION FACTOR"/>
    <property type="match status" value="1"/>
</dbReference>
<dbReference type="PANTHER" id="PTHR10641:SF596">
    <property type="entry name" value="MYB-RELATED PROTEIN ZM1"/>
    <property type="match status" value="1"/>
</dbReference>
<dbReference type="Pfam" id="PF00249">
    <property type="entry name" value="Myb_DNA-binding"/>
    <property type="match status" value="2"/>
</dbReference>
<dbReference type="SMART" id="SM00717">
    <property type="entry name" value="SANT"/>
    <property type="match status" value="2"/>
</dbReference>
<dbReference type="SUPFAM" id="SSF46689">
    <property type="entry name" value="Homeodomain-like"/>
    <property type="match status" value="1"/>
</dbReference>
<dbReference type="PROSITE" id="PS51294">
    <property type="entry name" value="HTH_MYB"/>
    <property type="match status" value="2"/>
</dbReference>
<accession>P20024</accession>
<evidence type="ECO:0000255" key="1">
    <source>
        <dbReference type="PROSITE-ProRule" id="PRU00625"/>
    </source>
</evidence>
<evidence type="ECO:0000256" key="2">
    <source>
        <dbReference type="SAM" id="MobiDB-lite"/>
    </source>
</evidence>
<evidence type="ECO:0000269" key="3">
    <source>
    </source>
</evidence>
<evidence type="ECO:0000305" key="4"/>